<keyword id="KW-0025">Alternative splicing</keyword>
<keyword id="KW-0106">Calcium</keyword>
<keyword id="KW-0130">Cell adhesion</keyword>
<keyword id="KW-0963">Cytoplasm</keyword>
<keyword id="KW-1015">Disulfide bond</keyword>
<keyword id="KW-0245">EGF-like domain</keyword>
<keyword id="KW-0325">Glycoprotein</keyword>
<keyword id="KW-0472">Membrane</keyword>
<keyword id="KW-0539">Nucleus</keyword>
<keyword id="KW-1185">Reference proteome</keyword>
<keyword id="KW-0677">Repeat</keyword>
<keyword id="KW-0964">Secreted</keyword>
<keyword id="KW-0732">Signal</keyword>
<keyword id="KW-0768">Sushi</keyword>
<protein>
    <recommendedName>
        <fullName>Sushi, von Willebrand factor type A, EGF and pentraxin domain-containing protein 1</fullName>
    </recommendedName>
    <alternativeName>
        <fullName>Polydom</fullName>
    </alternativeName>
</protein>
<organism>
    <name type="scientific">Mus musculus</name>
    <name type="common">Mouse</name>
    <dbReference type="NCBI Taxonomy" id="10090"/>
    <lineage>
        <taxon>Eukaryota</taxon>
        <taxon>Metazoa</taxon>
        <taxon>Chordata</taxon>
        <taxon>Craniata</taxon>
        <taxon>Vertebrata</taxon>
        <taxon>Euteleostomi</taxon>
        <taxon>Mammalia</taxon>
        <taxon>Eutheria</taxon>
        <taxon>Euarchontoglires</taxon>
        <taxon>Glires</taxon>
        <taxon>Rodentia</taxon>
        <taxon>Myomorpha</taxon>
        <taxon>Muroidea</taxon>
        <taxon>Muridae</taxon>
        <taxon>Murinae</taxon>
        <taxon>Mus</taxon>
        <taxon>Mus</taxon>
    </lineage>
</organism>
<feature type="signal peptide" evidence="3">
    <location>
        <begin position="1"/>
        <end position="17"/>
    </location>
</feature>
<feature type="chain" id="PRO_5000057616" description="Sushi, von Willebrand factor type A, EGF and pentraxin domain-containing protein 1">
    <location>
        <begin position="18"/>
        <end position="3567"/>
    </location>
</feature>
<feature type="domain" description="VWFA" evidence="6">
    <location>
        <begin position="84"/>
        <end position="265"/>
    </location>
</feature>
<feature type="domain" description="Sushi 1" evidence="7">
    <location>
        <begin position="377"/>
        <end position="436"/>
    </location>
</feature>
<feature type="domain" description="Sushi 2" evidence="7">
    <location>
        <begin position="437"/>
        <end position="496"/>
    </location>
</feature>
<feature type="domain" description="Sushi 3" evidence="7">
    <location>
        <begin position="497"/>
        <end position="561"/>
    </location>
</feature>
<feature type="domain" description="HYR 1" evidence="5">
    <location>
        <begin position="560"/>
        <end position="644"/>
    </location>
</feature>
<feature type="domain" description="HYR 2" evidence="5">
    <location>
        <begin position="645"/>
        <end position="724"/>
    </location>
</feature>
<feature type="domain" description="Sushi 4" evidence="7">
    <location>
        <begin position="725"/>
        <end position="789"/>
    </location>
</feature>
<feature type="domain" description="EGF-like 1" evidence="4">
    <location>
        <begin position="1192"/>
        <end position="1228"/>
    </location>
</feature>
<feature type="domain" description="EGF-like 2; calcium-binding" evidence="4">
    <location>
        <begin position="1230"/>
        <end position="1266"/>
    </location>
</feature>
<feature type="domain" description="EGF-like 3; calcium-binding" evidence="4">
    <location>
        <begin position="1268"/>
        <end position="1304"/>
    </location>
</feature>
<feature type="domain" description="EGF-like 4; calcium-binding" evidence="4">
    <location>
        <begin position="1306"/>
        <end position="1342"/>
    </location>
</feature>
<feature type="domain" description="EGF-like 5; calcium-binding" evidence="4">
    <location>
        <begin position="1344"/>
        <end position="1380"/>
    </location>
</feature>
<feature type="domain" description="EGF-like 6; calcium-binding" evidence="4">
    <location>
        <begin position="1382"/>
        <end position="1418"/>
    </location>
</feature>
<feature type="domain" description="Pentraxin (PTX)" evidence="8">
    <location>
        <begin position="1423"/>
        <end position="1627"/>
    </location>
</feature>
<feature type="domain" description="Sushi 5" evidence="7">
    <location>
        <begin position="1628"/>
        <end position="1686"/>
    </location>
</feature>
<feature type="domain" description="Sushi 6" evidence="7">
    <location>
        <begin position="1687"/>
        <end position="1744"/>
    </location>
</feature>
<feature type="domain" description="EGF-like 7; calcium-binding" evidence="4">
    <location>
        <begin position="1744"/>
        <end position="1783"/>
    </location>
</feature>
<feature type="domain" description="Sushi 7" evidence="7">
    <location>
        <begin position="1780"/>
        <end position="1843"/>
    </location>
</feature>
<feature type="domain" description="Sushi 8" evidence="7">
    <location>
        <begin position="1844"/>
        <end position="1901"/>
    </location>
</feature>
<feature type="domain" description="Sushi 9" evidence="7">
    <location>
        <begin position="1902"/>
        <end position="1959"/>
    </location>
</feature>
<feature type="domain" description="Sushi 10" evidence="7">
    <location>
        <begin position="1960"/>
        <end position="2017"/>
    </location>
</feature>
<feature type="domain" description="Sushi 11" evidence="7">
    <location>
        <begin position="2018"/>
        <end position="2079"/>
    </location>
</feature>
<feature type="domain" description="Sushi 12" evidence="7">
    <location>
        <begin position="2080"/>
        <end position="2142"/>
    </location>
</feature>
<feature type="domain" description="Sushi 13" evidence="7">
    <location>
        <begin position="2143"/>
        <end position="2200"/>
    </location>
</feature>
<feature type="domain" description="Sushi 14" evidence="7">
    <location>
        <begin position="2201"/>
        <end position="2260"/>
    </location>
</feature>
<feature type="domain" description="Sushi 15" evidence="7">
    <location>
        <begin position="2261"/>
        <end position="2319"/>
    </location>
</feature>
<feature type="domain" description="Sushi 16" evidence="7">
    <location>
        <begin position="2320"/>
        <end position="2377"/>
    </location>
</feature>
<feature type="domain" description="Sushi 17" evidence="7">
    <location>
        <begin position="2378"/>
        <end position="2436"/>
    </location>
</feature>
<feature type="domain" description="Sushi 18" evidence="7">
    <location>
        <begin position="2437"/>
        <end position="2494"/>
    </location>
</feature>
<feature type="domain" description="Sushi 19" evidence="7">
    <location>
        <begin position="2495"/>
        <end position="2552"/>
    </location>
</feature>
<feature type="domain" description="Sushi 20" evidence="7">
    <location>
        <begin position="2553"/>
        <end position="2609"/>
    </location>
</feature>
<feature type="domain" description="Sushi 21" evidence="7">
    <location>
        <begin position="2660"/>
        <end position="2711"/>
    </location>
</feature>
<feature type="domain" description="Sushi 22" evidence="7">
    <location>
        <begin position="2712"/>
        <end position="2769"/>
    </location>
</feature>
<feature type="domain" description="Sushi 23" evidence="7">
    <location>
        <begin position="2770"/>
        <end position="2827"/>
    </location>
</feature>
<feature type="domain" description="Sushi 24" evidence="7">
    <location>
        <begin position="2828"/>
        <end position="2885"/>
    </location>
</feature>
<feature type="domain" description="Sushi 25" evidence="7">
    <location>
        <begin position="2886"/>
        <end position="2943"/>
    </location>
</feature>
<feature type="domain" description="Sushi 26" evidence="7">
    <location>
        <begin position="2944"/>
        <end position="3001"/>
    </location>
</feature>
<feature type="domain" description="Sushi 27" evidence="7">
    <location>
        <begin position="3002"/>
        <end position="3057"/>
    </location>
</feature>
<feature type="domain" description="Sushi 28" evidence="7">
    <location>
        <begin position="3058"/>
        <end position="3115"/>
    </location>
</feature>
<feature type="domain" description="Sushi 29" evidence="7">
    <location>
        <begin position="3116"/>
        <end position="3174"/>
    </location>
</feature>
<feature type="domain" description="Sushi 30" evidence="7">
    <location>
        <begin position="3175"/>
        <end position="3234"/>
    </location>
</feature>
<feature type="domain" description="Sushi 31" evidence="7">
    <location>
        <begin position="3235"/>
        <end position="3292"/>
    </location>
</feature>
<feature type="domain" description="Sushi 32" evidence="7">
    <location>
        <begin position="3293"/>
        <end position="3350"/>
    </location>
</feature>
<feature type="domain" description="Sushi 33" evidence="7">
    <location>
        <begin position="3351"/>
        <end position="3409"/>
    </location>
</feature>
<feature type="domain" description="Sushi 34" evidence="7">
    <location>
        <begin position="3410"/>
        <end position="3466"/>
    </location>
</feature>
<feature type="domain" description="EGF-like 8" evidence="4">
    <location>
        <begin position="3496"/>
        <end position="3528"/>
    </location>
</feature>
<feature type="domain" description="EGF-like 9" evidence="4">
    <location>
        <begin position="3529"/>
        <end position="3560"/>
    </location>
</feature>
<feature type="region of interest" description="Important for the interaction with integrin ITGA9:ITGB1" evidence="11">
    <location>
        <begin position="2638"/>
        <end position="2645"/>
    </location>
</feature>
<feature type="site" description="Required for interaction with integrin ITGA9:ITGB1" evidence="11">
    <location>
        <position position="2641"/>
    </location>
</feature>
<feature type="glycosylation site" description="N-linked (GlcNAc...) asparagine" evidence="3">
    <location>
        <position position="187"/>
    </location>
</feature>
<feature type="disulfide bond" evidence="1">
    <location>
        <begin position="379"/>
        <end position="421"/>
    </location>
</feature>
<feature type="disulfide bond" evidence="1">
    <location>
        <begin position="407"/>
        <end position="434"/>
    </location>
</feature>
<feature type="disulfide bond" evidence="1">
    <location>
        <begin position="439"/>
        <end position="481"/>
    </location>
</feature>
<feature type="disulfide bond" evidence="1">
    <location>
        <begin position="467"/>
        <end position="494"/>
    </location>
</feature>
<feature type="disulfide bond" evidence="1">
    <location>
        <begin position="499"/>
        <end position="544"/>
    </location>
</feature>
<feature type="disulfide bond" evidence="1">
    <location>
        <begin position="530"/>
        <end position="559"/>
    </location>
</feature>
<feature type="disulfide bond" evidence="1">
    <location>
        <begin position="727"/>
        <end position="769"/>
    </location>
</feature>
<feature type="disulfide bond" evidence="1">
    <location>
        <begin position="753"/>
        <end position="787"/>
    </location>
</feature>
<feature type="disulfide bond" evidence="1">
    <location>
        <begin position="1196"/>
        <end position="1207"/>
    </location>
</feature>
<feature type="disulfide bond" evidence="1">
    <location>
        <begin position="1201"/>
        <end position="1216"/>
    </location>
</feature>
<feature type="disulfide bond" evidence="1">
    <location>
        <begin position="1218"/>
        <end position="1227"/>
    </location>
</feature>
<feature type="disulfide bond" evidence="1">
    <location>
        <begin position="1234"/>
        <end position="1245"/>
    </location>
</feature>
<feature type="disulfide bond" evidence="1">
    <location>
        <begin position="1239"/>
        <end position="1254"/>
    </location>
</feature>
<feature type="disulfide bond" evidence="1">
    <location>
        <begin position="1256"/>
        <end position="1265"/>
    </location>
</feature>
<feature type="disulfide bond" evidence="1">
    <location>
        <begin position="1272"/>
        <end position="1283"/>
    </location>
</feature>
<feature type="disulfide bond" evidence="1">
    <location>
        <begin position="1277"/>
        <end position="1292"/>
    </location>
</feature>
<feature type="disulfide bond" evidence="1">
    <location>
        <begin position="1294"/>
        <end position="1303"/>
    </location>
</feature>
<feature type="disulfide bond" evidence="1">
    <location>
        <begin position="1310"/>
        <end position="1321"/>
    </location>
</feature>
<feature type="disulfide bond" evidence="1">
    <location>
        <begin position="1315"/>
        <end position="1330"/>
    </location>
</feature>
<feature type="disulfide bond" evidence="1">
    <location>
        <begin position="1332"/>
        <end position="1341"/>
    </location>
</feature>
<feature type="disulfide bond" evidence="1">
    <location>
        <begin position="1348"/>
        <end position="1359"/>
    </location>
</feature>
<feature type="disulfide bond" evidence="1">
    <location>
        <begin position="1353"/>
        <end position="1368"/>
    </location>
</feature>
<feature type="disulfide bond" evidence="1">
    <location>
        <begin position="1370"/>
        <end position="1379"/>
    </location>
</feature>
<feature type="disulfide bond" evidence="1">
    <location>
        <begin position="1386"/>
        <end position="1397"/>
    </location>
</feature>
<feature type="disulfide bond" evidence="1">
    <location>
        <begin position="1391"/>
        <end position="1406"/>
    </location>
</feature>
<feature type="disulfide bond" evidence="1">
    <location>
        <begin position="1408"/>
        <end position="1417"/>
    </location>
</feature>
<feature type="disulfide bond" evidence="1">
    <location>
        <begin position="1630"/>
        <end position="1671"/>
    </location>
</feature>
<feature type="disulfide bond" evidence="1">
    <location>
        <begin position="1657"/>
        <end position="1684"/>
    </location>
</feature>
<feature type="disulfide bond" evidence="1">
    <location>
        <begin position="1689"/>
        <end position="1729"/>
    </location>
</feature>
<feature type="disulfide bond" evidence="1">
    <location>
        <begin position="1715"/>
        <end position="1742"/>
    </location>
</feature>
<feature type="disulfide bond" evidence="1">
    <location>
        <begin position="1748"/>
        <end position="1760"/>
    </location>
</feature>
<feature type="disulfide bond" evidence="1">
    <location>
        <begin position="1754"/>
        <end position="1769"/>
    </location>
</feature>
<feature type="disulfide bond" evidence="1">
    <location>
        <begin position="1771"/>
        <end position="1782"/>
    </location>
</feature>
<feature type="disulfide bond" evidence="1">
    <location>
        <begin position="1788"/>
        <end position="1828"/>
    </location>
</feature>
<feature type="disulfide bond" evidence="1">
    <location>
        <begin position="1814"/>
        <end position="1841"/>
    </location>
</feature>
<feature type="disulfide bond" evidence="1">
    <location>
        <begin position="1846"/>
        <end position="1886"/>
    </location>
</feature>
<feature type="disulfide bond" evidence="1">
    <location>
        <begin position="1872"/>
        <end position="1899"/>
    </location>
</feature>
<feature type="disulfide bond" evidence="1">
    <location>
        <begin position="1904"/>
        <end position="1944"/>
    </location>
</feature>
<feature type="disulfide bond" evidence="1">
    <location>
        <begin position="1930"/>
        <end position="1957"/>
    </location>
</feature>
<feature type="disulfide bond" evidence="1">
    <location>
        <begin position="1962"/>
        <end position="2002"/>
    </location>
</feature>
<feature type="disulfide bond" evidence="1">
    <location>
        <begin position="1988"/>
        <end position="2015"/>
    </location>
</feature>
<feature type="disulfide bond" evidence="1">
    <location>
        <begin position="2020"/>
        <end position="2060"/>
    </location>
</feature>
<feature type="disulfide bond" evidence="1">
    <location>
        <begin position="2046"/>
        <end position="2077"/>
    </location>
</feature>
<feature type="disulfide bond" evidence="1">
    <location>
        <begin position="2082"/>
        <end position="2125"/>
    </location>
</feature>
<feature type="disulfide bond" evidence="1">
    <location>
        <begin position="2111"/>
        <end position="2140"/>
    </location>
</feature>
<feature type="disulfide bond" evidence="1">
    <location>
        <begin position="2145"/>
        <end position="2185"/>
    </location>
</feature>
<feature type="disulfide bond" evidence="1">
    <location>
        <begin position="2171"/>
        <end position="2198"/>
    </location>
</feature>
<feature type="disulfide bond" evidence="1">
    <location>
        <begin position="2203"/>
        <end position="2244"/>
    </location>
</feature>
<feature type="disulfide bond" evidence="1">
    <location>
        <begin position="2230"/>
        <end position="2258"/>
    </location>
</feature>
<feature type="disulfide bond" evidence="1">
    <location>
        <begin position="2263"/>
        <end position="2303"/>
    </location>
</feature>
<feature type="disulfide bond" evidence="1">
    <location>
        <begin position="2289"/>
        <end position="2317"/>
    </location>
</feature>
<feature type="disulfide bond" evidence="1">
    <location>
        <begin position="2322"/>
        <end position="2362"/>
    </location>
</feature>
<feature type="disulfide bond" evidence="1">
    <location>
        <begin position="2348"/>
        <end position="2375"/>
    </location>
</feature>
<feature type="disulfide bond" evidence="1">
    <location>
        <begin position="2380"/>
        <end position="2421"/>
    </location>
</feature>
<feature type="disulfide bond" evidence="1">
    <location>
        <begin position="2407"/>
        <end position="2434"/>
    </location>
</feature>
<feature type="disulfide bond" evidence="1">
    <location>
        <begin position="2439"/>
        <end position="2479"/>
    </location>
</feature>
<feature type="disulfide bond" evidence="1">
    <location>
        <begin position="2465"/>
        <end position="2492"/>
    </location>
</feature>
<feature type="disulfide bond" evidence="1">
    <location>
        <begin position="2497"/>
        <end position="2537"/>
    </location>
</feature>
<feature type="disulfide bond" evidence="1">
    <location>
        <begin position="2523"/>
        <end position="2550"/>
    </location>
</feature>
<feature type="disulfide bond" evidence="1">
    <location>
        <begin position="2555"/>
        <end position="2595"/>
    </location>
</feature>
<feature type="disulfide bond" evidence="1">
    <location>
        <begin position="2581"/>
        <end position="2607"/>
    </location>
</feature>
<feature type="disulfide bond" evidence="1">
    <location>
        <begin position="2682"/>
        <end position="2709"/>
    </location>
</feature>
<feature type="disulfide bond" evidence="1">
    <location>
        <begin position="2714"/>
        <end position="2754"/>
    </location>
</feature>
<feature type="disulfide bond" evidence="1">
    <location>
        <begin position="2740"/>
        <end position="2767"/>
    </location>
</feature>
<feature type="disulfide bond" evidence="1">
    <location>
        <begin position="2772"/>
        <end position="2812"/>
    </location>
</feature>
<feature type="disulfide bond" evidence="1">
    <location>
        <begin position="2798"/>
        <end position="2825"/>
    </location>
</feature>
<feature type="disulfide bond" evidence="1">
    <location>
        <begin position="2830"/>
        <end position="2870"/>
    </location>
</feature>
<feature type="disulfide bond" evidence="1">
    <location>
        <begin position="2856"/>
        <end position="2883"/>
    </location>
</feature>
<feature type="disulfide bond" evidence="1">
    <location>
        <begin position="2888"/>
        <end position="2928"/>
    </location>
</feature>
<feature type="disulfide bond" evidence="1">
    <location>
        <begin position="2914"/>
        <end position="2941"/>
    </location>
</feature>
<feature type="disulfide bond" evidence="1">
    <location>
        <begin position="2946"/>
        <end position="2986"/>
    </location>
</feature>
<feature type="disulfide bond" evidence="1">
    <location>
        <begin position="2972"/>
        <end position="2999"/>
    </location>
</feature>
<feature type="disulfide bond" evidence="1">
    <location>
        <begin position="3004"/>
        <end position="3043"/>
    </location>
</feature>
<feature type="disulfide bond" evidence="1">
    <location>
        <begin position="3029"/>
        <end position="3055"/>
    </location>
</feature>
<feature type="disulfide bond" evidence="1">
    <location>
        <begin position="3060"/>
        <end position="3100"/>
    </location>
</feature>
<feature type="disulfide bond" evidence="1">
    <location>
        <begin position="3086"/>
        <end position="3113"/>
    </location>
</feature>
<feature type="disulfide bond" evidence="1">
    <location>
        <begin position="3118"/>
        <end position="3159"/>
    </location>
</feature>
<feature type="disulfide bond" evidence="1">
    <location>
        <begin position="3144"/>
        <end position="3172"/>
    </location>
</feature>
<feature type="disulfide bond" evidence="1">
    <location>
        <begin position="3177"/>
        <end position="3217"/>
    </location>
</feature>
<feature type="disulfide bond" evidence="1">
    <location>
        <begin position="3203"/>
        <end position="3232"/>
    </location>
</feature>
<feature type="disulfide bond" evidence="1">
    <location>
        <begin position="3237"/>
        <end position="3277"/>
    </location>
</feature>
<feature type="disulfide bond" evidence="1">
    <location>
        <begin position="3263"/>
        <end position="3290"/>
    </location>
</feature>
<feature type="disulfide bond" evidence="1">
    <location>
        <begin position="3295"/>
        <end position="3335"/>
    </location>
</feature>
<feature type="disulfide bond" evidence="1">
    <location>
        <begin position="3321"/>
        <end position="3348"/>
    </location>
</feature>
<feature type="disulfide bond" evidence="1">
    <location>
        <begin position="3353"/>
        <end position="3394"/>
    </location>
</feature>
<feature type="disulfide bond" evidence="1">
    <location>
        <begin position="3380"/>
        <end position="3407"/>
    </location>
</feature>
<feature type="disulfide bond" evidence="1">
    <location>
        <begin position="3412"/>
        <end position="3452"/>
    </location>
</feature>
<feature type="disulfide bond" evidence="1">
    <location>
        <begin position="3438"/>
        <end position="3464"/>
    </location>
</feature>
<feature type="disulfide bond" evidence="1">
    <location>
        <begin position="3500"/>
        <end position="3510"/>
    </location>
</feature>
<feature type="disulfide bond" evidence="1">
    <location>
        <begin position="3504"/>
        <end position="3516"/>
    </location>
</feature>
<feature type="disulfide bond" evidence="1">
    <location>
        <begin position="3518"/>
        <end position="3527"/>
    </location>
</feature>
<feature type="disulfide bond" evidence="1">
    <location>
        <begin position="3532"/>
        <end position="3542"/>
    </location>
</feature>
<feature type="disulfide bond" evidence="1">
    <location>
        <begin position="3536"/>
        <end position="3548"/>
    </location>
</feature>
<feature type="disulfide bond" evidence="1">
    <location>
        <begin position="3550"/>
        <end position="3559"/>
    </location>
</feature>
<feature type="splice variant" id="VSP_031629" description="In isoform 2." evidence="17">
    <original>VRTCP</original>
    <variation>GMESG</variation>
    <location>
        <begin position="436"/>
        <end position="440"/>
    </location>
</feature>
<feature type="splice variant" id="VSP_031630" description="In isoform 2." evidence="17">
    <location>
        <begin position="441"/>
        <end position="3567"/>
    </location>
</feature>
<feature type="mutagenesis site" description="No effect on the interaction with integrin ITGA9:ITGB1." evidence="11">
    <original>D</original>
    <variation>A</variation>
    <location>
        <position position="2634"/>
    </location>
</feature>
<feature type="mutagenesis site" description="No effect on the interaction with integrin ITGA9:ITGB1." evidence="11">
    <original>Q</original>
    <variation>A</variation>
    <location>
        <position position="2635"/>
    </location>
</feature>
<feature type="mutagenesis site" description="No effect on the interaction with integrin ITGA9:ITGB1." evidence="11">
    <original>E</original>
    <variation>A</variation>
    <location>
        <position position="2636"/>
    </location>
</feature>
<feature type="mutagenesis site" description="Reduces interaction with integrin ITGA9:ITGB1." evidence="11">
    <original>D</original>
    <variation>A</variation>
    <location>
        <position position="2637"/>
    </location>
</feature>
<feature type="mutagenesis site" description="Reduces interaction with integrin ITGA9:ITGB1." evidence="11">
    <original>D</original>
    <variation>A</variation>
    <location>
        <position position="2638"/>
    </location>
</feature>
<feature type="mutagenesis site" description="No effect on the interaction with integrin ITGA9:ITGB1." evidence="11">
    <original>M</original>
    <variation>A</variation>
    <location>
        <position position="2639"/>
    </location>
</feature>
<feature type="mutagenesis site" description="Reduces interaction with integrin ITGA9:ITGB1." evidence="11">
    <original>M</original>
    <variation>A</variation>
    <location>
        <position position="2640"/>
    </location>
</feature>
<feature type="mutagenesis site" description="Abolishes interaction with integrin ITGA9:ITGB1." evidence="11">
    <original>E</original>
    <variation>A</variation>
    <location>
        <position position="2641"/>
    </location>
</feature>
<feature type="mutagenesis site" description="No effect on the interaction with integrin ITGA9:ITGB1." evidence="11">
    <original>V</original>
    <variation>A</variation>
    <location>
        <position position="2642"/>
    </location>
</feature>
<feature type="mutagenesis site" description="No effect on the interaction with integrin ITGA9:ITGB1." evidence="11">
    <original>P</original>
    <variation>A</variation>
    <location>
        <position position="2643"/>
    </location>
</feature>
<feature type="mutagenesis site" description="No effect on the interaction with integrin ITGA9:ITGB1." evidence="11">
    <original>Y</original>
    <variation>A</variation>
    <location>
        <position position="2644"/>
    </location>
</feature>
<feature type="mutagenesis site" description="No effect on the interaction with integrin ITGA9:ITGB1." evidence="11">
    <original>L</original>
    <variation>A</variation>
    <location>
        <position position="2645"/>
    </location>
</feature>
<feature type="sequence conflict" description="In Ref. 1; AAG32160." evidence="18" ref="1">
    <original>F</original>
    <variation>S</variation>
    <location>
        <position position="1480"/>
    </location>
</feature>
<feature type="sequence conflict" description="In Ref. 1; AAG32160." evidence="18" ref="1">
    <original>D</original>
    <variation>N</variation>
    <location>
        <position position="1528"/>
    </location>
</feature>
<feature type="sequence conflict" description="In Ref. 2; BAB29505." evidence="18" ref="2">
    <original>R</original>
    <variation>K</variation>
    <location>
        <position position="3143"/>
    </location>
</feature>
<gene>
    <name type="primary">Svep1</name>
</gene>
<accession>A2AVA0</accession>
<accession>Q8C720</accession>
<accession>Q8CBT2</accession>
<accession>Q922H0</accession>
<accession>Q9CUT3</accession>
<accession>Q9ES77</accession>
<name>SVEP1_MOUSE</name>
<dbReference type="EMBL" id="AF206329">
    <property type="protein sequence ID" value="AAG32160.1"/>
    <property type="molecule type" value="mRNA"/>
</dbReference>
<dbReference type="EMBL" id="AK052699">
    <property type="protein sequence ID" value="BAC35103.1"/>
    <property type="molecule type" value="mRNA"/>
</dbReference>
<dbReference type="EMBL" id="AK014693">
    <property type="protein sequence ID" value="BAB29505.1"/>
    <property type="molecule type" value="mRNA"/>
</dbReference>
<dbReference type="EMBL" id="AK035333">
    <property type="protein sequence ID" value="BAC29036.1"/>
    <property type="molecule type" value="mRNA"/>
</dbReference>
<dbReference type="EMBL" id="AL805969">
    <property type="status" value="NOT_ANNOTATED_CDS"/>
    <property type="molecule type" value="Genomic_DNA"/>
</dbReference>
<dbReference type="EMBL" id="AL929406">
    <property type="status" value="NOT_ANNOTATED_CDS"/>
    <property type="molecule type" value="Genomic_DNA"/>
</dbReference>
<dbReference type="EMBL" id="BC008135">
    <property type="protein sequence ID" value="AAH08135.1"/>
    <property type="molecule type" value="mRNA"/>
</dbReference>
<dbReference type="CCDS" id="CCDS18209.1">
    <molecule id="A2AVA0-1"/>
</dbReference>
<dbReference type="RefSeq" id="NP_073725.2">
    <molecule id="A2AVA0-1"/>
    <property type="nucleotide sequence ID" value="NM_022814.2"/>
</dbReference>
<dbReference type="SMR" id="A2AVA0"/>
<dbReference type="BioGRID" id="211104">
    <property type="interactions" value="1"/>
</dbReference>
<dbReference type="FunCoup" id="A2AVA0">
    <property type="interactions" value="401"/>
</dbReference>
<dbReference type="STRING" id="10090.ENSMUSP00000045856"/>
<dbReference type="GlyCosmos" id="A2AVA0">
    <property type="glycosylation" value="1 site, No reported glycans"/>
</dbReference>
<dbReference type="GlyGen" id="A2AVA0">
    <property type="glycosylation" value="11 sites, 6 N-linked glycans (8 sites)"/>
</dbReference>
<dbReference type="iPTMnet" id="A2AVA0"/>
<dbReference type="PhosphoSitePlus" id="A2AVA0"/>
<dbReference type="SwissPalm" id="A2AVA0"/>
<dbReference type="jPOST" id="A2AVA0"/>
<dbReference type="PaxDb" id="10090-ENSMUSP00000045856"/>
<dbReference type="ProteomicsDB" id="257105">
    <molecule id="A2AVA0-1"/>
</dbReference>
<dbReference type="ProteomicsDB" id="257106">
    <molecule id="A2AVA0-2"/>
</dbReference>
<dbReference type="Pumba" id="A2AVA0"/>
<dbReference type="Antibodypedia" id="7229">
    <property type="antibodies" value="19 antibodies from 8 providers"/>
</dbReference>
<dbReference type="DNASU" id="64817"/>
<dbReference type="Ensembl" id="ENSMUST00000042850.9">
    <molecule id="A2AVA0-1"/>
    <property type="protein sequence ID" value="ENSMUSP00000045856.9"/>
    <property type="gene ID" value="ENSMUSG00000028369.16"/>
</dbReference>
<dbReference type="GeneID" id="64817"/>
<dbReference type="KEGG" id="mmu:64817"/>
<dbReference type="UCSC" id="uc008syr.1">
    <molecule id="A2AVA0-1"/>
    <property type="organism name" value="mouse"/>
</dbReference>
<dbReference type="UCSC" id="uc008sys.1">
    <molecule id="A2AVA0-2"/>
    <property type="organism name" value="mouse"/>
</dbReference>
<dbReference type="AGR" id="MGI:1928849"/>
<dbReference type="CTD" id="79987"/>
<dbReference type="MGI" id="MGI:1928849">
    <property type="gene designation" value="Svep1"/>
</dbReference>
<dbReference type="VEuPathDB" id="HostDB:ENSMUSG00000028369"/>
<dbReference type="eggNOG" id="KOG1217">
    <property type="taxonomic scope" value="Eukaryota"/>
</dbReference>
<dbReference type="eggNOG" id="KOG4297">
    <property type="taxonomic scope" value="Eukaryota"/>
</dbReference>
<dbReference type="GeneTree" id="ENSGT00940000156061"/>
<dbReference type="HOGENOM" id="CLU_000343_0_0_1"/>
<dbReference type="InParanoid" id="A2AVA0"/>
<dbReference type="OMA" id="NKNWDGN"/>
<dbReference type="OrthoDB" id="6515930at2759"/>
<dbReference type="PhylomeDB" id="A2AVA0"/>
<dbReference type="TreeFam" id="TF342247"/>
<dbReference type="BioGRID-ORCS" id="64817">
    <property type="hits" value="2 hits in 76 CRISPR screens"/>
</dbReference>
<dbReference type="ChiTaRS" id="Svep1">
    <property type="organism name" value="mouse"/>
</dbReference>
<dbReference type="PRO" id="PR:A2AVA0"/>
<dbReference type="Proteomes" id="UP000000589">
    <property type="component" value="Chromosome 4"/>
</dbReference>
<dbReference type="RNAct" id="A2AVA0">
    <property type="molecule type" value="protein"/>
</dbReference>
<dbReference type="Bgee" id="ENSMUSG00000028369">
    <property type="expression patterns" value="Expressed in vault of skull and 158 other cell types or tissues"/>
</dbReference>
<dbReference type="GO" id="GO:0005737">
    <property type="term" value="C:cytoplasm"/>
    <property type="evidence" value="ECO:0000266"/>
    <property type="project" value="MGI"/>
</dbReference>
<dbReference type="GO" id="GO:0031012">
    <property type="term" value="C:extracellular matrix"/>
    <property type="evidence" value="ECO:0000304"/>
    <property type="project" value="MGI"/>
</dbReference>
<dbReference type="GO" id="GO:0005576">
    <property type="term" value="C:extracellular region"/>
    <property type="evidence" value="ECO:0000314"/>
    <property type="project" value="UniProtKB"/>
</dbReference>
<dbReference type="GO" id="GO:0005615">
    <property type="term" value="C:extracellular space"/>
    <property type="evidence" value="ECO:0000314"/>
    <property type="project" value="MGI"/>
</dbReference>
<dbReference type="GO" id="GO:0016020">
    <property type="term" value="C:membrane"/>
    <property type="evidence" value="ECO:0007669"/>
    <property type="project" value="UniProtKB-SubCell"/>
</dbReference>
<dbReference type="GO" id="GO:0005634">
    <property type="term" value="C:nucleus"/>
    <property type="evidence" value="ECO:0000266"/>
    <property type="project" value="MGI"/>
</dbReference>
<dbReference type="GO" id="GO:0005509">
    <property type="term" value="F:calcium ion binding"/>
    <property type="evidence" value="ECO:0007669"/>
    <property type="project" value="InterPro"/>
</dbReference>
<dbReference type="GO" id="GO:0003682">
    <property type="term" value="F:chromatin binding"/>
    <property type="evidence" value="ECO:0000314"/>
    <property type="project" value="MGI"/>
</dbReference>
<dbReference type="GO" id="GO:0005178">
    <property type="term" value="F:integrin binding"/>
    <property type="evidence" value="ECO:0000315"/>
    <property type="project" value="UniProtKB"/>
</dbReference>
<dbReference type="GO" id="GO:0098640">
    <property type="term" value="F:integrin binding involved in cell-matrix adhesion"/>
    <property type="evidence" value="ECO:0000314"/>
    <property type="project" value="UniProtKB"/>
</dbReference>
<dbReference type="GO" id="GO:0016477">
    <property type="term" value="P:cell migration"/>
    <property type="evidence" value="ECO:0000266"/>
    <property type="project" value="MGI"/>
</dbReference>
<dbReference type="GO" id="GO:0008544">
    <property type="term" value="P:epidermis development"/>
    <property type="evidence" value="ECO:0000315"/>
    <property type="project" value="MGI"/>
</dbReference>
<dbReference type="GO" id="GO:0090136">
    <property type="term" value="P:epithelial cell-cell adhesion"/>
    <property type="evidence" value="ECO:0000266"/>
    <property type="project" value="MGI"/>
</dbReference>
<dbReference type="GO" id="GO:0010467">
    <property type="term" value="P:gene expression"/>
    <property type="evidence" value="ECO:0000315"/>
    <property type="project" value="MGI"/>
</dbReference>
<dbReference type="GO" id="GO:0003017">
    <property type="term" value="P:lymph circulation"/>
    <property type="evidence" value="ECO:0000315"/>
    <property type="project" value="MGI"/>
</dbReference>
<dbReference type="GO" id="GO:0001945">
    <property type="term" value="P:lymph vessel development"/>
    <property type="evidence" value="ECO:0000315"/>
    <property type="project" value="MGI"/>
</dbReference>
<dbReference type="GO" id="GO:0036303">
    <property type="term" value="P:lymph vessel morphogenesis"/>
    <property type="evidence" value="ECO:0000315"/>
    <property type="project" value="MGI"/>
</dbReference>
<dbReference type="GO" id="GO:0045906">
    <property type="term" value="P:negative regulation of vasoconstriction"/>
    <property type="evidence" value="ECO:0000250"/>
    <property type="project" value="UniProtKB"/>
</dbReference>
<dbReference type="GO" id="GO:0010572">
    <property type="term" value="P:positive regulation of platelet activation"/>
    <property type="evidence" value="ECO:0000315"/>
    <property type="project" value="UniProtKB"/>
</dbReference>
<dbReference type="GO" id="GO:0048014">
    <property type="term" value="P:Tie signaling pathway"/>
    <property type="evidence" value="ECO:0000315"/>
    <property type="project" value="MGI"/>
</dbReference>
<dbReference type="GO" id="GO:0120193">
    <property type="term" value="P:tight junction organization"/>
    <property type="evidence" value="ECO:0000315"/>
    <property type="project" value="MGI"/>
</dbReference>
<dbReference type="CDD" id="cd00033">
    <property type="entry name" value="CCP"/>
    <property type="match status" value="33"/>
</dbReference>
<dbReference type="CDD" id="cd00054">
    <property type="entry name" value="EGF_CA"/>
    <property type="match status" value="7"/>
</dbReference>
<dbReference type="CDD" id="cd00152">
    <property type="entry name" value="PTX"/>
    <property type="match status" value="1"/>
</dbReference>
<dbReference type="CDD" id="cd01450">
    <property type="entry name" value="vWFA_subfamily_ECM"/>
    <property type="match status" value="1"/>
</dbReference>
<dbReference type="FunFam" id="2.10.70.10:FF:000011">
    <property type="entry name" value="CUB and sushi domain-containing protein 3 isoform A"/>
    <property type="match status" value="7"/>
</dbReference>
<dbReference type="FunFam" id="2.10.25.10:FF:000038">
    <property type="entry name" value="Fibrillin 2"/>
    <property type="match status" value="1"/>
</dbReference>
<dbReference type="FunFam" id="2.10.70.10:FF:000086">
    <property type="entry name" value="Hig-anchoring scaffold protein, isoform A"/>
    <property type="match status" value="1"/>
</dbReference>
<dbReference type="FunFam" id="2.10.25.10:FF:000004">
    <property type="entry name" value="Neurogenic locus notch 1"/>
    <property type="match status" value="1"/>
</dbReference>
<dbReference type="FunFam" id="2.60.120.200:FF:000012">
    <property type="entry name" value="neuronal pentraxin receptor"/>
    <property type="match status" value="1"/>
</dbReference>
<dbReference type="FunFam" id="2.10.25.10:FF:000122">
    <property type="entry name" value="Protein crumbs homolog 2"/>
    <property type="match status" value="1"/>
</dbReference>
<dbReference type="FunFam" id="2.10.25.10:FF:000225">
    <property type="entry name" value="Sushi, von Willebrand factor type A, EGF and pentraxin domain containing 1"/>
    <property type="match status" value="1"/>
</dbReference>
<dbReference type="FunFam" id="2.10.70.10:FF:000183">
    <property type="entry name" value="Sushi, von Willebrand factor type A, EGF and pentraxin domain containing 1"/>
    <property type="match status" value="1"/>
</dbReference>
<dbReference type="FunFam" id="2.10.25.10:FF:000553">
    <property type="entry name" value="Sushi, von Willebrand factor type A, EGF and pentraxin domain-containing 1"/>
    <property type="match status" value="1"/>
</dbReference>
<dbReference type="FunFam" id="2.10.50.10:FF:000018">
    <property type="entry name" value="Sushi, von Willebrand factor type A, EGF and pentraxin domain-containing 1"/>
    <property type="match status" value="2"/>
</dbReference>
<dbReference type="FunFam" id="2.10.25.10:FF:000640">
    <property type="entry name" value="Sushi, von Willebrand factor type A, EGF and pentraxin domain-containing protein 1"/>
    <property type="match status" value="1"/>
</dbReference>
<dbReference type="FunFam" id="2.10.25.10:FF:000814">
    <property type="entry name" value="Sushi, von Willebrand factor type A, EGF and pentraxin domain-containing protein 1"/>
    <property type="match status" value="1"/>
</dbReference>
<dbReference type="FunFam" id="2.10.50.10:FF:000070">
    <property type="entry name" value="Sushi, von Willebrand factor type A, EGF and pentraxin domain-containing protein 1"/>
    <property type="match status" value="1"/>
</dbReference>
<dbReference type="FunFam" id="2.10.70.10:FF:000193">
    <property type="entry name" value="Sushi, von Willebrand factor type A, EGF and pentraxin domain-containing protein 1"/>
    <property type="match status" value="1"/>
</dbReference>
<dbReference type="FunFam" id="2.10.70.10:FF:000257">
    <property type="entry name" value="Sushi, von Willebrand factor type A, EGF and pentraxin domain-containing protein 1"/>
    <property type="match status" value="1"/>
</dbReference>
<dbReference type="FunFam" id="3.40.50.410:FF:000070">
    <property type="entry name" value="sushi, von Willebrand factor type A, EGF and pentraxin domain-containing protein 1"/>
    <property type="match status" value="1"/>
</dbReference>
<dbReference type="FunFam" id="2.10.25.10:FF:000309">
    <property type="entry name" value="Uncharacterized protein, isoform A"/>
    <property type="match status" value="1"/>
</dbReference>
<dbReference type="FunFam" id="2.10.70.10:FF:000003">
    <property type="entry name" value="Versican core protein"/>
    <property type="match status" value="1"/>
</dbReference>
<dbReference type="Gene3D" id="2.60.120.200">
    <property type="match status" value="1"/>
</dbReference>
<dbReference type="Gene3D" id="2.10.70.10">
    <property type="entry name" value="Complement Module, domain 1"/>
    <property type="match status" value="33"/>
</dbReference>
<dbReference type="Gene3D" id="2.60.40.10">
    <property type="entry name" value="Immunoglobulins"/>
    <property type="match status" value="1"/>
</dbReference>
<dbReference type="Gene3D" id="2.10.25.10">
    <property type="entry name" value="Laminin"/>
    <property type="match status" value="10"/>
</dbReference>
<dbReference type="Gene3D" id="2.10.50.10">
    <property type="entry name" value="Tumor Necrosis Factor Receptor, subunit A, domain 2"/>
    <property type="match status" value="4"/>
</dbReference>
<dbReference type="Gene3D" id="3.40.50.410">
    <property type="entry name" value="von Willebrand factor, type A domain"/>
    <property type="match status" value="1"/>
</dbReference>
<dbReference type="InterPro" id="IPR013320">
    <property type="entry name" value="ConA-like_dom_sf"/>
</dbReference>
<dbReference type="InterPro" id="IPR001881">
    <property type="entry name" value="EGF-like_Ca-bd_dom"/>
</dbReference>
<dbReference type="InterPro" id="IPR013032">
    <property type="entry name" value="EGF-like_CS"/>
</dbReference>
<dbReference type="InterPro" id="IPR000742">
    <property type="entry name" value="EGF-like_dom"/>
</dbReference>
<dbReference type="InterPro" id="IPR000152">
    <property type="entry name" value="EGF-type_Asp/Asn_hydroxyl_site"/>
</dbReference>
<dbReference type="InterPro" id="IPR018097">
    <property type="entry name" value="EGF_Ca-bd_CS"/>
</dbReference>
<dbReference type="InterPro" id="IPR024731">
    <property type="entry name" value="EGF_dom"/>
</dbReference>
<dbReference type="InterPro" id="IPR009030">
    <property type="entry name" value="Growth_fac_rcpt_cys_sf"/>
</dbReference>
<dbReference type="InterPro" id="IPR003410">
    <property type="entry name" value="HYR_dom"/>
</dbReference>
<dbReference type="InterPro" id="IPR013783">
    <property type="entry name" value="Ig-like_fold"/>
</dbReference>
<dbReference type="InterPro" id="IPR049883">
    <property type="entry name" value="NOTCH1_EGF-like"/>
</dbReference>
<dbReference type="InterPro" id="IPR001759">
    <property type="entry name" value="Pentraxin-related"/>
</dbReference>
<dbReference type="InterPro" id="IPR051277">
    <property type="entry name" value="SEZ6_CSMD_C4BPB_Regulators"/>
</dbReference>
<dbReference type="InterPro" id="IPR035976">
    <property type="entry name" value="Sushi/SCR/CCP_sf"/>
</dbReference>
<dbReference type="InterPro" id="IPR000436">
    <property type="entry name" value="Sushi_SCR_CCP_dom"/>
</dbReference>
<dbReference type="InterPro" id="IPR011641">
    <property type="entry name" value="Tyr-kin_ephrin_A/B_rcpt-like"/>
</dbReference>
<dbReference type="InterPro" id="IPR002035">
    <property type="entry name" value="VWF_A"/>
</dbReference>
<dbReference type="InterPro" id="IPR036465">
    <property type="entry name" value="vWFA_dom_sf"/>
</dbReference>
<dbReference type="PANTHER" id="PTHR45656">
    <property type="entry name" value="PROTEIN CBR-CLEC-78"/>
    <property type="match status" value="1"/>
</dbReference>
<dbReference type="PANTHER" id="PTHR45656:SF4">
    <property type="entry name" value="PROTEIN CBR-CLEC-78"/>
    <property type="match status" value="1"/>
</dbReference>
<dbReference type="Pfam" id="PF00008">
    <property type="entry name" value="EGF"/>
    <property type="match status" value="5"/>
</dbReference>
<dbReference type="Pfam" id="PF12947">
    <property type="entry name" value="EGF_3"/>
    <property type="match status" value="1"/>
</dbReference>
<dbReference type="Pfam" id="PF07645">
    <property type="entry name" value="EGF_CA"/>
    <property type="match status" value="1"/>
</dbReference>
<dbReference type="Pfam" id="PF07699">
    <property type="entry name" value="Ephrin_rec_like"/>
    <property type="match status" value="4"/>
</dbReference>
<dbReference type="Pfam" id="PF12661">
    <property type="entry name" value="hEGF"/>
    <property type="match status" value="1"/>
</dbReference>
<dbReference type="Pfam" id="PF02494">
    <property type="entry name" value="HYR"/>
    <property type="match status" value="2"/>
</dbReference>
<dbReference type="Pfam" id="PF00354">
    <property type="entry name" value="Pentaxin"/>
    <property type="match status" value="1"/>
</dbReference>
<dbReference type="Pfam" id="PF00084">
    <property type="entry name" value="Sushi"/>
    <property type="match status" value="33"/>
</dbReference>
<dbReference type="Pfam" id="PF00092">
    <property type="entry name" value="VWA"/>
    <property type="match status" value="1"/>
</dbReference>
<dbReference type="PRINTS" id="PR00895">
    <property type="entry name" value="PENTAXIN"/>
</dbReference>
<dbReference type="SMART" id="SM00032">
    <property type="entry name" value="CCP"/>
    <property type="match status" value="34"/>
</dbReference>
<dbReference type="SMART" id="SM00181">
    <property type="entry name" value="EGF"/>
    <property type="match status" value="12"/>
</dbReference>
<dbReference type="SMART" id="SM00179">
    <property type="entry name" value="EGF_CA"/>
    <property type="match status" value="8"/>
</dbReference>
<dbReference type="SMART" id="SM01411">
    <property type="entry name" value="Ephrin_rec_like"/>
    <property type="match status" value="4"/>
</dbReference>
<dbReference type="SMART" id="SM00159">
    <property type="entry name" value="PTX"/>
    <property type="match status" value="1"/>
</dbReference>
<dbReference type="SMART" id="SM00327">
    <property type="entry name" value="VWA"/>
    <property type="match status" value="1"/>
</dbReference>
<dbReference type="SUPFAM" id="SSF57535">
    <property type="entry name" value="Complement control module/SCR domain"/>
    <property type="match status" value="33"/>
</dbReference>
<dbReference type="SUPFAM" id="SSF49899">
    <property type="entry name" value="Concanavalin A-like lectins/glucanases"/>
    <property type="match status" value="1"/>
</dbReference>
<dbReference type="SUPFAM" id="SSF57196">
    <property type="entry name" value="EGF/Laminin"/>
    <property type="match status" value="4"/>
</dbReference>
<dbReference type="SUPFAM" id="SSF57184">
    <property type="entry name" value="Growth factor receptor domain"/>
    <property type="match status" value="3"/>
</dbReference>
<dbReference type="SUPFAM" id="SSF53300">
    <property type="entry name" value="vWA-like"/>
    <property type="match status" value="1"/>
</dbReference>
<dbReference type="PROSITE" id="PS00010">
    <property type="entry name" value="ASX_HYDROXYL"/>
    <property type="match status" value="6"/>
</dbReference>
<dbReference type="PROSITE" id="PS00022">
    <property type="entry name" value="EGF_1"/>
    <property type="match status" value="9"/>
</dbReference>
<dbReference type="PROSITE" id="PS01186">
    <property type="entry name" value="EGF_2"/>
    <property type="match status" value="11"/>
</dbReference>
<dbReference type="PROSITE" id="PS50026">
    <property type="entry name" value="EGF_3"/>
    <property type="match status" value="9"/>
</dbReference>
<dbReference type="PROSITE" id="PS01187">
    <property type="entry name" value="EGF_CA"/>
    <property type="match status" value="6"/>
</dbReference>
<dbReference type="PROSITE" id="PS50825">
    <property type="entry name" value="HYR"/>
    <property type="match status" value="2"/>
</dbReference>
<dbReference type="PROSITE" id="PS51828">
    <property type="entry name" value="PTX_2"/>
    <property type="match status" value="1"/>
</dbReference>
<dbReference type="PROSITE" id="PS50923">
    <property type="entry name" value="SUSHI"/>
    <property type="match status" value="34"/>
</dbReference>
<dbReference type="PROSITE" id="PS50234">
    <property type="entry name" value="VWFA"/>
    <property type="match status" value="1"/>
</dbReference>
<comment type="function">
    <text evidence="10 11 12 13 14 15 16">Required for morphological development, cell alignment and migration of lymphatic endothelial cells during embryonic development, potentially via modulation of ANGPT2-TIE1 signaling and subsequent activation of FOXC2 transcription (PubMed:28179430). Required for embryonic lymphatic vascular development, via mediating the correct formation of the first lymphovenous contact site and tight association of the lymphatic endothelium with the venous endothelium (PubMed:28179432). Represses PRKCA-mediated L-type voltage-gated channel Ca(2+) influx and ROCK-mediated calcium sensitivity in vascular smooth muscle cells, via its interaction with integrins, thereby inhibiting vasocontraction (PubMed:35802072). Promotes platelet activation, via its interaction with PEAR1 and subsequent activation of AKT/mTOR signaling (PubMed:36792666). Plays a role in epidermal development and keratinocyte differentiation, independent of cell-cell adhesion (PubMed:27892606). May play a role in initial cell attachment of stromal osteogenic cells (PubMed:16206243). May promote myoblast cell adhesion when in the presence of integrin ITGA9:ITGB1 (PubMed:22654117).</text>
</comment>
<comment type="subunit">
    <text evidence="2 11 13 16">Interacts (via Sushi domain 21) with ITGA9:ITGB1; thereby inhibits Ca(2+) intracellular signaling and as a result represses vasocontraction (PubMed:22654117, PubMed:28179430). Interacts (via Sushi domain 21) with ITGA4:ITGB1; thereby inhibits Ca(2+) intracellular signaling and as a result represses vasocontraction (By similarity). Interacts with ANGPT1 and ANGPT2 (PubMed:28179430). Interacts with PEAR1 (via extracellular domain) (By similarity). Interacts with HSPG2, TLN1, FN1, COPA, CCT2, IQGAP1, LAMC1 and NID1 (PubMed:36792666). Interacts (via C-terminus) with TIE1 (By similarity).</text>
</comment>
<comment type="subcellular location">
    <subcellularLocation>
        <location evidence="11">Secreted</location>
    </subcellularLocation>
    <subcellularLocation>
        <location evidence="2">Nucleus</location>
    </subcellularLocation>
    <subcellularLocation>
        <location evidence="2">Cytoplasm</location>
    </subcellularLocation>
    <subcellularLocation>
        <location evidence="2">Membrane</location>
        <topology evidence="2">Peripheral membrane protein</topology>
    </subcellularLocation>
</comment>
<comment type="alternative products">
    <event type="alternative splicing"/>
    <isoform>
        <id>A2AVA0-1</id>
        <name>1</name>
        <sequence type="displayed"/>
    </isoform>
    <isoform>
        <id>A2AVA0-2</id>
        <name>2</name>
        <sequence type="described" ref="VSP_031629 VSP_031630"/>
    </isoform>
</comment>
<comment type="tissue specificity">
    <text evidence="9 10 15">Expressed in the media layer of the arterial wall (at protein level) (PubMed:35802072). Highly expressed in lung and placenta, weakly expressed in the kidney, heart, brain and spleen (PubMed:11062057). Also expressed in bone and periosteum, but not in cartilage and skeletal muscle (PubMed:16206243).</text>
</comment>
<comment type="developmental stage">
    <text evidence="9 10 11 13 14">Expressed from 11 dpc to 17.5 dpc in embryos (PubMed:11062057, PubMed:22654117). Expressed by mesenchymal stem cells around the primordial thoracic duct at 12.5 dpc (at protein level) (PubMed:28179430). Initially expressed in the lungs at 15.5, expression is weakly evident in the smooth muscle layer of the lung at 16.5 dpc (at protein level) (PubMed:22654117). Expressed by mesenchymal stem cells in a fibrillar patterns around the primitive lymphatic plexus at 15.5 dpc and the collecting lymphatic vessels and valves in the skin and mesentery at 18.5 dpc (at protein level) (PubMed:28179430). Expressed at the submucosal mesenchyme in the stomach and intestine at 16.5 dpc (at protein level) (PubMed:22654117). Expressed in the sinusoids in the liver, and Bowmans capsules and inter-renal tubule mesenchyme at 16.5 dpc (at protein level) (PubMed:22654117). Expressed in the stomach and intestines at 16.5 dpc (PubMed:22654117). Expressed in the mesentery lymphatic vessel and nerve at 18.5 dpc (at protein level) (PubMed:28179432). Expressed in the bone and periosteum at birth (PubMed:16206243).</text>
</comment>
<comment type="disruption phenotype">
    <text evidence="12 13 14">Embryos display edema from 14.5 dpc onwards (PubMed:28179432). Mice are cyanotic and die within 30 minutes of birth, showing severe edema with excessive fluid accumulation in the thoracic and abdominal cavities and subcutaneous space (PubMed:28179430). The excessive accumulation of pleural fluid in the lungs impairs the inflation of the alveolar space and results in respiratory failure (PubMed:28179430). Formation of the first lymphovenous contact site develops abnormally, with spatial separation evident between the endothelial layer of the cardinal vein and the cells of the primordial thoracic duct at 12.5 dpc (PubMed:28179432). Loss of lymphatic and venous endothelium association at the prospective valve formation site at 13.5 dpc (PubMed:28179432). The dermal primitive lymphatic plexus forms however Vegfr3-positive lymphatic vessels show many bumps and size variations at 15.5 dpc (PubMed:28179430). Lymphatic vessels form secondary sprouts however lymphatic endothelial cells fail to elongate and yield rounded bumps at 18.5 dpc (PubMed:28179430). Failure of mesentery lymphatic plexus remodeling, resulting in smaller branched lymphatic vessels that fail to develop luminal valves that show increased expression levels of Flt4/Vegfr-3, Pecam1/Cd31 and Prox1 at 18.5 dpc (PubMed:28179430, PubMed:28179432). The intestinal lymphatic plexus develops as normal, however the lacteals fail to migrate into the villi at 18.5 dpc (PubMed:28179430). Extracardiac lymphatic endothelial cells migrate into the ventricular surface however migration failed to continue into the apex of the heart 18.5 dpc (PubMed:28179430). Loss of lymphatic drainage in the buccal region and hindlimb footpad at 15.5 dpc and ventral skin at 18.5 dpc (PubMed:28179430). Lymphatic endothelial cells show a cuboidal shape and fail to align longitudinally with the lymphatic flow in mesentery lymphatic vessels at 18.5 dpc (PubMed:28179430). No effect on expression of the lymphatic developmental marker Prox1 in mesenteric lymphatic endothelial cells at 16.5 and 18.5 dpc (PubMed:28179430). Expression of the lymphatic vascular maturation marker Foxc2 is significantly decreased in mesenteric lymphatic endothelial cells at both 16.5 and 18.5 dpc (PubMed:28179430). Expression of Foxc3 is also decreased in skin lymphatic endothelial cells at both 15.5 and 18.5 dpc (PubMed:28179430). Loss of the time-dependent decrease in Lyve1 expression in mesenteric lymphatic endothelial cells at 18.5 dpc (PubMed:28179430). Decrease in expression of both Tie1 and Tek/Tie2 in dermal lymphatic endothelial cells at 16.5 and 18.5 dpc (PubMed:28179430). Epidermal layers are significantly thicker at 18.5 dpc (PubMed:27892606).</text>
</comment>
<reference key="1">
    <citation type="journal article" date="2000" name="Biochem. J.">
        <title>Polydom: a secreted protein with pentraxin, complement control protein, epidermal growth factor and von Willebrand factor A domains.</title>
        <authorList>
            <person name="Gilges D."/>
            <person name="Vinit M.-A."/>
            <person name="Callebaut I."/>
            <person name="Coulombel L."/>
            <person name="Cacheux V."/>
            <person name="Romeo P.-H."/>
            <person name="Vigon I."/>
        </authorList>
    </citation>
    <scope>NUCLEOTIDE SEQUENCE [MRNA] (ISOFORM 1)</scope>
    <scope>TISSUE SPECIFICITY</scope>
    <scope>DEVELOPMENTAL STAGE</scope>
    <source>
        <strain>C3H/HeN</strain>
    </source>
</reference>
<reference key="2">
    <citation type="journal article" date="2005" name="Science">
        <title>The transcriptional landscape of the mammalian genome.</title>
        <authorList>
            <person name="Carninci P."/>
            <person name="Kasukawa T."/>
            <person name="Katayama S."/>
            <person name="Gough J."/>
            <person name="Frith M.C."/>
            <person name="Maeda N."/>
            <person name="Oyama R."/>
            <person name="Ravasi T."/>
            <person name="Lenhard B."/>
            <person name="Wells C."/>
            <person name="Kodzius R."/>
            <person name="Shimokawa K."/>
            <person name="Bajic V.B."/>
            <person name="Brenner S.E."/>
            <person name="Batalov S."/>
            <person name="Forrest A.R."/>
            <person name="Zavolan M."/>
            <person name="Davis M.J."/>
            <person name="Wilming L.G."/>
            <person name="Aidinis V."/>
            <person name="Allen J.E."/>
            <person name="Ambesi-Impiombato A."/>
            <person name="Apweiler R."/>
            <person name="Aturaliya R.N."/>
            <person name="Bailey T.L."/>
            <person name="Bansal M."/>
            <person name="Baxter L."/>
            <person name="Beisel K.W."/>
            <person name="Bersano T."/>
            <person name="Bono H."/>
            <person name="Chalk A.M."/>
            <person name="Chiu K.P."/>
            <person name="Choudhary V."/>
            <person name="Christoffels A."/>
            <person name="Clutterbuck D.R."/>
            <person name="Crowe M.L."/>
            <person name="Dalla E."/>
            <person name="Dalrymple B.P."/>
            <person name="de Bono B."/>
            <person name="Della Gatta G."/>
            <person name="di Bernardo D."/>
            <person name="Down T."/>
            <person name="Engstrom P."/>
            <person name="Fagiolini M."/>
            <person name="Faulkner G."/>
            <person name="Fletcher C.F."/>
            <person name="Fukushima T."/>
            <person name="Furuno M."/>
            <person name="Futaki S."/>
            <person name="Gariboldi M."/>
            <person name="Georgii-Hemming P."/>
            <person name="Gingeras T.R."/>
            <person name="Gojobori T."/>
            <person name="Green R.E."/>
            <person name="Gustincich S."/>
            <person name="Harbers M."/>
            <person name="Hayashi Y."/>
            <person name="Hensch T.K."/>
            <person name="Hirokawa N."/>
            <person name="Hill D."/>
            <person name="Huminiecki L."/>
            <person name="Iacono M."/>
            <person name="Ikeo K."/>
            <person name="Iwama A."/>
            <person name="Ishikawa T."/>
            <person name="Jakt M."/>
            <person name="Kanapin A."/>
            <person name="Katoh M."/>
            <person name="Kawasawa Y."/>
            <person name="Kelso J."/>
            <person name="Kitamura H."/>
            <person name="Kitano H."/>
            <person name="Kollias G."/>
            <person name="Krishnan S.P."/>
            <person name="Kruger A."/>
            <person name="Kummerfeld S.K."/>
            <person name="Kurochkin I.V."/>
            <person name="Lareau L.F."/>
            <person name="Lazarevic D."/>
            <person name="Lipovich L."/>
            <person name="Liu J."/>
            <person name="Liuni S."/>
            <person name="McWilliam S."/>
            <person name="Madan Babu M."/>
            <person name="Madera M."/>
            <person name="Marchionni L."/>
            <person name="Matsuda H."/>
            <person name="Matsuzawa S."/>
            <person name="Miki H."/>
            <person name="Mignone F."/>
            <person name="Miyake S."/>
            <person name="Morris K."/>
            <person name="Mottagui-Tabar S."/>
            <person name="Mulder N."/>
            <person name="Nakano N."/>
            <person name="Nakauchi H."/>
            <person name="Ng P."/>
            <person name="Nilsson R."/>
            <person name="Nishiguchi S."/>
            <person name="Nishikawa S."/>
            <person name="Nori F."/>
            <person name="Ohara O."/>
            <person name="Okazaki Y."/>
            <person name="Orlando V."/>
            <person name="Pang K.C."/>
            <person name="Pavan W.J."/>
            <person name="Pavesi G."/>
            <person name="Pesole G."/>
            <person name="Petrovsky N."/>
            <person name="Piazza S."/>
            <person name="Reed J."/>
            <person name="Reid J.F."/>
            <person name="Ring B.Z."/>
            <person name="Ringwald M."/>
            <person name="Rost B."/>
            <person name="Ruan Y."/>
            <person name="Salzberg S.L."/>
            <person name="Sandelin A."/>
            <person name="Schneider C."/>
            <person name="Schoenbach C."/>
            <person name="Sekiguchi K."/>
            <person name="Semple C.A."/>
            <person name="Seno S."/>
            <person name="Sessa L."/>
            <person name="Sheng Y."/>
            <person name="Shibata Y."/>
            <person name="Shimada H."/>
            <person name="Shimada K."/>
            <person name="Silva D."/>
            <person name="Sinclair B."/>
            <person name="Sperling S."/>
            <person name="Stupka E."/>
            <person name="Sugiura K."/>
            <person name="Sultana R."/>
            <person name="Takenaka Y."/>
            <person name="Taki K."/>
            <person name="Tammoja K."/>
            <person name="Tan S.L."/>
            <person name="Tang S."/>
            <person name="Taylor M.S."/>
            <person name="Tegner J."/>
            <person name="Teichmann S.A."/>
            <person name="Ueda H.R."/>
            <person name="van Nimwegen E."/>
            <person name="Verardo R."/>
            <person name="Wei C.L."/>
            <person name="Yagi K."/>
            <person name="Yamanishi H."/>
            <person name="Zabarovsky E."/>
            <person name="Zhu S."/>
            <person name="Zimmer A."/>
            <person name="Hide W."/>
            <person name="Bult C."/>
            <person name="Grimmond S.M."/>
            <person name="Teasdale R.D."/>
            <person name="Liu E.T."/>
            <person name="Brusic V."/>
            <person name="Quackenbush J."/>
            <person name="Wahlestedt C."/>
            <person name="Mattick J.S."/>
            <person name="Hume D.A."/>
            <person name="Kai C."/>
            <person name="Sasaki D."/>
            <person name="Tomaru Y."/>
            <person name="Fukuda S."/>
            <person name="Kanamori-Katayama M."/>
            <person name="Suzuki M."/>
            <person name="Aoki J."/>
            <person name="Arakawa T."/>
            <person name="Iida J."/>
            <person name="Imamura K."/>
            <person name="Itoh M."/>
            <person name="Kato T."/>
            <person name="Kawaji H."/>
            <person name="Kawagashira N."/>
            <person name="Kawashima T."/>
            <person name="Kojima M."/>
            <person name="Kondo S."/>
            <person name="Konno H."/>
            <person name="Nakano K."/>
            <person name="Ninomiya N."/>
            <person name="Nishio T."/>
            <person name="Okada M."/>
            <person name="Plessy C."/>
            <person name="Shibata K."/>
            <person name="Shiraki T."/>
            <person name="Suzuki S."/>
            <person name="Tagami M."/>
            <person name="Waki K."/>
            <person name="Watahiki A."/>
            <person name="Okamura-Oho Y."/>
            <person name="Suzuki H."/>
            <person name="Kawai J."/>
            <person name="Hayashizaki Y."/>
        </authorList>
    </citation>
    <scope>NUCLEOTIDE SEQUENCE [LARGE SCALE MRNA] (ISOFORM 2)</scope>
    <scope>NUCLEOTIDE SEQUENCE [LARGE SCALE MRNA] OF 1-848 AND 2967-3567</scope>
    <source>
        <strain>C57BL/6J</strain>
        <tissue>Head</tissue>
        <tissue>Kidney</tissue>
        <tissue>Urinary bladder</tissue>
    </source>
</reference>
<reference key="3">
    <citation type="journal article" date="2009" name="PLoS Biol.">
        <title>Lineage-specific biology revealed by a finished genome assembly of the mouse.</title>
        <authorList>
            <person name="Church D.M."/>
            <person name="Goodstadt L."/>
            <person name="Hillier L.W."/>
            <person name="Zody M.C."/>
            <person name="Goldstein S."/>
            <person name="She X."/>
            <person name="Bult C.J."/>
            <person name="Agarwala R."/>
            <person name="Cherry J.L."/>
            <person name="DiCuccio M."/>
            <person name="Hlavina W."/>
            <person name="Kapustin Y."/>
            <person name="Meric P."/>
            <person name="Maglott D."/>
            <person name="Birtle Z."/>
            <person name="Marques A.C."/>
            <person name="Graves T."/>
            <person name="Zhou S."/>
            <person name="Teague B."/>
            <person name="Potamousis K."/>
            <person name="Churas C."/>
            <person name="Place M."/>
            <person name="Herschleb J."/>
            <person name="Runnheim R."/>
            <person name="Forrest D."/>
            <person name="Amos-Landgraf J."/>
            <person name="Schwartz D.C."/>
            <person name="Cheng Z."/>
            <person name="Lindblad-Toh K."/>
            <person name="Eichler E.E."/>
            <person name="Ponting C.P."/>
        </authorList>
    </citation>
    <scope>NUCLEOTIDE SEQUENCE [LARGE SCALE GENOMIC DNA]</scope>
    <source>
        <strain>C57BL/6J</strain>
    </source>
</reference>
<reference key="4">
    <citation type="journal article" date="2004" name="Genome Res.">
        <title>The status, quality, and expansion of the NIH full-length cDNA project: the Mammalian Gene Collection (MGC).</title>
        <authorList>
            <consortium name="The MGC Project Team"/>
        </authorList>
    </citation>
    <scope>NUCLEOTIDE SEQUENCE [LARGE SCALE MRNA] OF 2899-3567</scope>
    <source>
        <strain>FVB/N</strain>
        <tissue>Mammary tumor</tissue>
    </source>
</reference>
<reference key="5">
    <citation type="journal article" date="2006" name="J. Cell. Physiol.">
        <title>Molecular and cellular characterization of SEL-OB/SVEP1 in osteogenic cells in vivo and in vitro.</title>
        <authorList>
            <person name="Shur I."/>
            <person name="Socher R."/>
            <person name="Hameiri M."/>
            <person name="Fried A."/>
            <person name="Benayahu D."/>
        </authorList>
    </citation>
    <scope>FUNCTION</scope>
    <scope>DEVELOPMENTAL STAGE</scope>
</reference>
<reference key="6">
    <citation type="journal article" date="2010" name="Cell">
        <title>A tissue-specific atlas of mouse protein phosphorylation and expression.</title>
        <authorList>
            <person name="Huttlin E.L."/>
            <person name="Jedrychowski M.P."/>
            <person name="Elias J.E."/>
            <person name="Goswami T."/>
            <person name="Rad R."/>
            <person name="Beausoleil S.A."/>
            <person name="Villen J."/>
            <person name="Haas W."/>
            <person name="Sowa M.E."/>
            <person name="Gygi S.P."/>
        </authorList>
    </citation>
    <scope>IDENTIFICATION BY MASS SPECTROMETRY [LARGE SCALE ANALYSIS]</scope>
    <source>
        <tissue>Lung</tissue>
    </source>
</reference>
<reference key="7">
    <citation type="journal article" date="2012" name="J. Biol. Chem.">
        <title>Polydom/SVEP1 is a ligand for integrin alpha9beta1.</title>
        <authorList>
            <person name="Sato-Nishiuchi R."/>
            <person name="Nakano I."/>
            <person name="Ozawa A."/>
            <person name="Sato Y."/>
            <person name="Takeichi M."/>
            <person name="Kiyozumi D."/>
            <person name="Yamazaki K."/>
            <person name="Yasunaga T."/>
            <person name="Futaki S."/>
            <person name="Sekiguchi K."/>
        </authorList>
    </citation>
    <scope>FUNCTION</scope>
    <scope>INTERACTION WITH ITGA9:ITGB1</scope>
    <scope>SUBCELLULAR LOCATION</scope>
    <scope>DEVELOPMENTAL STAGE</scope>
    <scope>MUTAGENESIS OF ASP-2634; GLN-2635; GLU-2636; ASP-2637; ASP-2638; MET-2639; MET-2640; GLU-2641; VAL-2642; PRO-2643; TYR-2644 AND LEU-2645</scope>
</reference>
<reference key="8">
    <citation type="journal article" date="2017" name="Circ. Res.">
        <title>An Evolutionarily Conserved Role for Polydom/Svep1 During Lymphatic Vessel Formation.</title>
        <authorList>
            <person name="Karpanen T."/>
            <person name="Padberg Y."/>
            <person name="van de Pavert S.A."/>
            <person name="Dierkes C."/>
            <person name="Morooka N."/>
            <person name="Peterson-Maduro J."/>
            <person name="van de Hoek G."/>
            <person name="Adrian M."/>
            <person name="Mochizuki N."/>
            <person name="Sekiguchi K."/>
            <person name="Kiefer F."/>
            <person name="Schulte D."/>
            <person name="Schulte-Merker S."/>
        </authorList>
    </citation>
    <scope>FUNCTION</scope>
    <scope>DEVELOPMENTAL STAGE</scope>
    <scope>DISRUPTION PHENOTYPE</scope>
</reference>
<reference key="9">
    <citation type="journal article" date="2017" name="Circ. Res.">
        <title>Polydom Is an Extracellular Matrix Protein Involved in Lymphatic Vessel Remodeling.</title>
        <authorList>
            <person name="Morooka N."/>
            <person name="Futaki S."/>
            <person name="Sato-Nishiuchi R."/>
            <person name="Nishino M."/>
            <person name="Totani Y."/>
            <person name="Shimono C."/>
            <person name="Nakano I."/>
            <person name="Nakajima H."/>
            <person name="Mochizuki N."/>
            <person name="Sekiguchi K."/>
        </authorList>
    </citation>
    <scope>FUNCTION</scope>
    <scope>INTERACTION WITH ANGPT1; ANGPT2 AND ITGA9:ITGB1</scope>
    <scope>DEVELOPMENTAL STAGE</scope>
    <scope>DISRUPTION PHENOTYPE</scope>
</reference>
<reference key="10">
    <citation type="journal article" date="2017" name="Exp. Dermatol.">
        <title>SVEP1 plays a crucial role in epidermal differentiation.</title>
        <authorList>
            <person name="Samuelov L."/>
            <person name="Li Q."/>
            <person name="Bochner R."/>
            <person name="Najor N.A."/>
            <person name="Albrecht L."/>
            <person name="Malchin N."/>
            <person name="Goldsmith T."/>
            <person name="Grafi-Cohen M."/>
            <person name="Vodo D."/>
            <person name="Fainberg G."/>
            <person name="Meilik B."/>
            <person name="Goldberg I."/>
            <person name="Warshauer E."/>
            <person name="Rogers T."/>
            <person name="Edie S."/>
            <person name="Ishida-Yamamoto A."/>
            <person name="Burzenski L."/>
            <person name="Erez N."/>
            <person name="Murray S.A."/>
            <person name="Irvine A.D."/>
            <person name="Shultz L."/>
            <person name="Green K.J."/>
            <person name="Uitto J."/>
            <person name="Sprecher E."/>
            <person name="Sarig O."/>
        </authorList>
    </citation>
    <scope>FUNCTION</scope>
    <scope>DISRUPTION PHENOTYPE</scope>
</reference>
<reference key="11">
    <citation type="journal article" date="2022" name="Br. J. Pharmacol.">
        <title>The integrin ligand SVEP1 regulates GPCR-mediated vasoconstriction via integrins alpha9beta1 and alpha4beta1.</title>
        <authorList>
            <person name="Morris G.E."/>
            <person name="Denniff M.J."/>
            <person name="Karamanavi E."/>
            <person name="Andrews S.A."/>
            <person name="Kostogrys R.B."/>
            <person name="Bountziouka V."/>
            <person name="Ghaderi-Najafabadi M."/>
            <person name="Shamkhi N."/>
            <person name="McConnell G."/>
            <person name="Kaiser M.A."/>
            <person name="Carleton L."/>
            <person name="Schofield C."/>
            <person name="Kessler T."/>
            <person name="Rainbow R.D."/>
            <person name="Samani N.J."/>
            <person name="Webb T.R."/>
        </authorList>
    </citation>
    <scope>FUNCTION</scope>
    <scope>TISSUE SPECIFICITY</scope>
</reference>
<reference key="12">
    <citation type="journal article" date="2023" name="Nat. Commun.">
        <title>SVEP1 is an endogenous ligand for the orphan receptor PEAR1.</title>
        <authorList>
            <person name="Elenbaas J.S."/>
            <person name="Pudupakkam U."/>
            <person name="Ashworth K.J."/>
            <person name="Kang C.J."/>
            <person name="Patel V."/>
            <person name="Santana K."/>
            <person name="Jung I.H."/>
            <person name="Lee P.C."/>
            <person name="Burks K.H."/>
            <person name="Amrute J.M."/>
            <person name="Mecham R.P."/>
            <person name="Halabi C.M."/>
            <person name="Alisio A."/>
            <person name="Di Paola J."/>
            <person name="Stitziel N.O."/>
        </authorList>
    </citation>
    <scope>FUNCTION</scope>
    <scope>INTERACTION WITH HSPG2; TLN1; FN1; COPA; CCT2; IQGAP1; LAMC1 AND NID1</scope>
</reference>
<sequence length="3567" mass="387457">MWSRLAFCCWALALVSGWTNFQPVAPSLNFSFRLFPEASPGALGRLAVPPASSEEEAAGSKVERLGRAFRSRVRRLRELSGSLELVFLVDESSSVGQTNFLNELKFVRKLLSDFPVVSTATRVAIVTFSSKNNVVARVDYISTSRAHQHKCALLSREIPAITYRGGGTYTKGAFQQAAQILRHSRENSTKVIFLITDGYSNGGDPRPIAASLRDFGVEIFTFGIWQGNIRELNDMASTPKEEHCYLLHSFEEFEALARRALHEDLPSGSFIQEDMARCSYLCEAGKDCCDRMASCKCGTHTGQFECICEKGYYGKGLQHECTACPSGTYKPEASPGGISTCIPCPDVSHTSPPGSTSPEDCVCREGYQRSGQTCEVVHCPALKPPENGFFIQNTCKNHFNAACGVRCRPGFDLVGSSIHLCQPNGLWSGTESFCRVRTCPHLRQPKHGHISCSTAEMSYNTLCLVTCNEGYRLEGSTRLTCQGNAQWDGPEPRCVERHCATFQKPKGVIISPPSCGKQPARPGMTCQLSCRQGYILSGVREVRCATSGKWSAKVQTAVCKDVEAPQISCPNDIEAKTGEQQDSANVTWQVPTAKDNSGEKVSVHVHPAFTPPYLFPIGDVAITYTATDSSGNQASCTFYIKVIDVEPPVIDWCRSPPPIQVVEKEHPASWDEPQFSDNSGAELVITSSHTQGDMFPHGETVVWYTATDPSGNNRTCDIHIVIKGSPCEVPFTPVNGDFICAQDSAGVNCSLSCKEGYDFTEGSTEKYYCAFEDGIWRPPYSTEWPDCAIKRFANHGFKSFEMLYKTTRCDDMDLFKKFSAAFETTLGNMVPSFCNDADDIDCRLEDLTKKYCIEYNYNYENGFAIGPGGWGAGNRLDYSYDHFLDVVQETPTDVGKARSSRIKRTVPLSDPKIQLIFNITASVPLPEERNDTLELENQQRLIKTLETITNRLKSTLNKEPMYSFQLASETVVADSNSLETEKAFLFCRPGSVLRGRMCVNCPLGTSYSLEHSTCESCLMGSYQDEEGQLECKLCPPRTHTEYLHSRSVSECKAQCKQGTYSSSGLETCESCPLGTYQPEFGSRSCLLCPETTTTVKRGAVDISACGVPCPVGEFSRSGLTPCYPCPRDYYQPNAGKSFCLACPFYGTTTITGATSITDCSSFSSTFSAAEESIVPLVAPGHSQNKYEVSSQVFHECFLNPCHNSGTCQQLGRGYVCLCPPGYTGLKCETDIDECSSLPCLNGGICRDQVGGFTCECSLGYSGQICEENINECISSPCLNKGTCTDGLASYRCTCVKGYMGVHCETDVNECQSSPCLNNAVCKDQVGGFSCKCPPGFLGTRCEKNVDECLSQPCQNGATCKDGANSFRCQCPAGFTGTHCELNINECQSNPCRNQATCVDELNSYSCKCQPGFSGHRCETEQPSGFNLDFEVSGIYGYVLLDGVLPTLHAITCAFWMKSSDVINYGTPISYALEDDKDNTFLLTDYNGWVLYVNGKEKITNCPSVNDGIWHHIAITWTSTGGAWRVYIDGELSDGGTGLSIGKAIPGGGALVLGQEQDKKGEGFNPAESFVGSISQLNLWDYVLSPQQVKLLASSCPEELSRGNVLAWPDFLSGITGKVKVDSSSMFCSDCPSLEGSVPHLRPASGNRKPGSKVSLFCDPGFQMVGNPVQYCLNQGQWTQPLPHCERIRCGLPPALENGFYSAEDFHAGSTVTYQCTSGYYLLGDSRMFCTDNGSWNGISPSCLDVDECAVGSDCSEHASCLNTNGSYVCSCNPPYTGDGKNCAEPVKCKAPENPENGHSSGEIYTVGTAVTFSCDEGHELVGVSTITCLETGEWDRLRPSCEAISCGVPPVPENGGVDGSAFTYGSKVVYRCDKGYTLSGDEESACLASGSWSHSSPVCELVKCSQPEDINNGKYILSGLTYLSIASYSCENGYSLQGPSLLECTASGSWDRAPPSCQLVSCGEPPIVKDAVITGSNFTFGNTVAYTCKEGYTLAGPDTIVCQANGKWNSSNHQCLAVSCDEPPNVDHASPETAHRLFGDTAFYYCADGYSLADNSQLICNAQGNWVPPAGQAVPRCIAHFCEKPPSVSYSILESVSKAKFAAGSVVSFKCMEGFVLNTSAKIECLRGGEWSPSPLSVQCIPVRCGEPPSIANGYPSGTNYSFGAVVAYSCHKGFYIKGEKKSTCEATGQWSKPTPTCHPVSCNEPPKVENGFLEHTTGRTFESEARFQCNPGYKAAGSPVFVCQANRHWHSDAPLSCTPLNCGKPPPIQNGFLKGESFEVGSKVQFVCNEGYELVGDNSWTCQKSGKWSKKPSPKCVPTKCAEPPLLENQLVLKELASEVGVMTISCKEGHALQGPSVLKCLPSGQWNGSFPICKMVLCPSPPLIPFGVPASSGALHFGSTVKYLCVDGFFLRGSPTILCQADSTWSSPLPECVPVECPQPEEILNGIIHVQGLAYLSTTLYTCKPGFELVGNATTLCGENGQWLGGKPMCKPIECPEPKEILNGQFSSVSFQYGQTITYFCDRGFRLEGPKSLTCLETGDWDMDPPSCDAIHCSDPQPIENGFVEGADYRYGAMIIYSCFPGFQVLGHAMQTCEESGWSSSSPTCVPIDCGLPPHIDFGDCTKVRDGQGHFDQEDDMMEVPYLAHPQHLEATAKALENTKESPASHASHFLYGTMVSYSCEPGYELLGIPVLICQEDGTWNGTAPSCISIECDLPVAPENGFLHFTQTTMGSAAQYSCKPGHILEGSHLRLCLQNKQWSGTVPRCEAISCSKPNPLWNGSIKGDDYSYLGVLYYECDSGYILNGSKKRTCQENRDWDGHEPMCIPVDCGSPPVPTNGRVKGEEYTFQKEITYSCREGFILEGARSRICLTNGSWSGATPSCMPVRCPAPPQVPNGVADGLDYGFKKEVAFHCLEGYVLQGAPRLTCQSNGTWDAEVPVCKPATCGPPADLPQGFPNGFSFYHGGHIQYQCFTGYKLHGNPSRRCLPNGSWSGSSPSCLPCRCSTPIIQQGTINATDLGCGKTVQIECFKGFKLLGLSEITCDANGQWSDVPLCEHAQCGPLPTIPNAIVLEGSLSEDNVVTYSCRPGYTMQGSSDLICTEKAIWSQPYPTCEPLSCGPPPTVANAVATGEAHTYESKVKLRCLEGYVMDSDTDTFTCQQDGHWVPERITCSPKKCPVPSNMTRIRFHGDDFQVNRQVSVSCAEGFTHEGVNWSTCQPDGTWEPPFSDESCIPVVCGHPESPAHGSVVGNKHSFGSTIVYQCDPGYKLEGNRERICQENRQWSGEVAVCRENRCETPAEFPNGKAVLENTTSGPSLLFSCHRGYTLEGSPEAHCTANGTWNHLTPLCKPNPCPVPFVIPENAVLSEKEFYVDQNVSIKCREGFLLKGNGVITCSPDETWTHTNARCEKISCGPPSHVENAIARGVYYQYGDMITYSCYSGYMLEGSLRSVCLENGTWTPSPVCRAVCRFPCQNGGVCQRPNACSCPDGWMGRLCEEPICILPCLNGGRCVAPYQCDCPTGWTGSRCHTATCQSPCLNGGKCIRPNRCHCLSAWTGHDCSRKRRAGL</sequence>
<proteinExistence type="evidence at protein level"/>
<evidence type="ECO:0000250" key="1"/>
<evidence type="ECO:0000250" key="2">
    <source>
        <dbReference type="UniProtKB" id="Q4LDE5"/>
    </source>
</evidence>
<evidence type="ECO:0000255" key="3"/>
<evidence type="ECO:0000255" key="4">
    <source>
        <dbReference type="PROSITE-ProRule" id="PRU00076"/>
    </source>
</evidence>
<evidence type="ECO:0000255" key="5">
    <source>
        <dbReference type="PROSITE-ProRule" id="PRU00113"/>
    </source>
</evidence>
<evidence type="ECO:0000255" key="6">
    <source>
        <dbReference type="PROSITE-ProRule" id="PRU00219"/>
    </source>
</evidence>
<evidence type="ECO:0000255" key="7">
    <source>
        <dbReference type="PROSITE-ProRule" id="PRU00302"/>
    </source>
</evidence>
<evidence type="ECO:0000255" key="8">
    <source>
        <dbReference type="PROSITE-ProRule" id="PRU01172"/>
    </source>
</evidence>
<evidence type="ECO:0000269" key="9">
    <source>
    </source>
</evidence>
<evidence type="ECO:0000269" key="10">
    <source>
    </source>
</evidence>
<evidence type="ECO:0000269" key="11">
    <source>
    </source>
</evidence>
<evidence type="ECO:0000269" key="12">
    <source>
    </source>
</evidence>
<evidence type="ECO:0000269" key="13">
    <source>
    </source>
</evidence>
<evidence type="ECO:0000269" key="14">
    <source>
    </source>
</evidence>
<evidence type="ECO:0000269" key="15">
    <source>
    </source>
</evidence>
<evidence type="ECO:0000269" key="16">
    <source>
    </source>
</evidence>
<evidence type="ECO:0000303" key="17">
    <source>
    </source>
</evidence>
<evidence type="ECO:0000305" key="18"/>